<comment type="function">
    <text evidence="1">CIPK serine-threonine protein kinases interact with CBL proteins. Binding of a CBL protein to the regulatory NAF domain of CIPK protein lead to the activation of the kinase in a calcium-dependent manner (By similarity).</text>
</comment>
<comment type="catalytic activity">
    <reaction>
        <text>L-seryl-[protein] + ATP = O-phospho-L-seryl-[protein] + ADP + H(+)</text>
        <dbReference type="Rhea" id="RHEA:17989"/>
        <dbReference type="Rhea" id="RHEA-COMP:9863"/>
        <dbReference type="Rhea" id="RHEA-COMP:11604"/>
        <dbReference type="ChEBI" id="CHEBI:15378"/>
        <dbReference type="ChEBI" id="CHEBI:29999"/>
        <dbReference type="ChEBI" id="CHEBI:30616"/>
        <dbReference type="ChEBI" id="CHEBI:83421"/>
        <dbReference type="ChEBI" id="CHEBI:456216"/>
        <dbReference type="EC" id="2.7.11.1"/>
    </reaction>
</comment>
<comment type="catalytic activity">
    <reaction>
        <text>L-threonyl-[protein] + ATP = O-phospho-L-threonyl-[protein] + ADP + H(+)</text>
        <dbReference type="Rhea" id="RHEA:46608"/>
        <dbReference type="Rhea" id="RHEA-COMP:11060"/>
        <dbReference type="Rhea" id="RHEA-COMP:11605"/>
        <dbReference type="ChEBI" id="CHEBI:15378"/>
        <dbReference type="ChEBI" id="CHEBI:30013"/>
        <dbReference type="ChEBI" id="CHEBI:30616"/>
        <dbReference type="ChEBI" id="CHEBI:61977"/>
        <dbReference type="ChEBI" id="CHEBI:456216"/>
        <dbReference type="EC" id="2.7.11.1"/>
    </reaction>
</comment>
<comment type="cofactor">
    <cofactor evidence="1">
        <name>Mn(2+)</name>
        <dbReference type="ChEBI" id="CHEBI:29035"/>
    </cofactor>
</comment>
<comment type="subunit">
    <text evidence="8">Interacts with CBL4/SOS3.</text>
</comment>
<comment type="interaction">
    <interactant intactId="EBI-537572">
        <id>Q9C562</id>
    </interactant>
    <interactant intactId="EBI-974530">
        <id>O81445</id>
        <label>CBL1</label>
    </interactant>
    <organismsDiffer>false</organismsDiffer>
    <experiments>3</experiments>
</comment>
<comment type="interaction">
    <interactant intactId="EBI-537572">
        <id>Q9C562</id>
    </interactant>
    <interactant intactId="EBI-637381">
        <id>Q9LTB8</id>
        <label>CBL9</label>
    </interactant>
    <organismsDiffer>false</organismsDiffer>
    <experiments>9</experiments>
</comment>
<comment type="tissue specificity">
    <text evidence="9">Mostly expressed in roots.</text>
</comment>
<comment type="induction">
    <text evidence="9">By salt stress.</text>
</comment>
<comment type="domain">
    <text evidence="1">The activation loop within the kinase domain is the target of phosphorylation/activation by upstream protein kinases. The PPI motif mediates the interaction with the ABI (abscisic acid-insensitive) phosphatases (By similarity).</text>
</comment>
<comment type="similarity">
    <text evidence="10">Belongs to the protein kinase superfamily. CAMK Ser/Thr protein kinase family. SNF1 subfamily.</text>
</comment>
<comment type="sequence caution" evidence="10">
    <conflict type="erroneous gene model prediction">
        <sequence resource="EMBL-CDS" id="BAA96929"/>
    </conflict>
</comment>
<feature type="chain" id="PRO_0000337213" description="CBL-interacting serine/threonine-protein kinase 10">
    <location>
        <begin position="1"/>
        <end position="479"/>
    </location>
</feature>
<feature type="domain" description="Protein kinase" evidence="4">
    <location>
        <begin position="12"/>
        <end position="266"/>
    </location>
</feature>
<feature type="domain" description="NAF" evidence="5">
    <location>
        <begin position="322"/>
        <end position="346"/>
    </location>
</feature>
<feature type="region of interest" description="Activation loop" evidence="1">
    <location>
        <begin position="152"/>
        <end position="181"/>
    </location>
</feature>
<feature type="region of interest" description="Disordered" evidence="7">
    <location>
        <begin position="286"/>
        <end position="323"/>
    </location>
</feature>
<feature type="region of interest" description="PPI" evidence="1">
    <location>
        <begin position="350"/>
        <end position="379"/>
    </location>
</feature>
<feature type="region of interest" description="Disordered" evidence="7">
    <location>
        <begin position="456"/>
        <end position="479"/>
    </location>
</feature>
<feature type="compositionally biased region" description="Low complexity" evidence="7">
    <location>
        <begin position="288"/>
        <end position="300"/>
    </location>
</feature>
<feature type="compositionally biased region" description="Basic and acidic residues" evidence="7">
    <location>
        <begin position="311"/>
        <end position="323"/>
    </location>
</feature>
<feature type="compositionally biased region" description="Low complexity" evidence="7">
    <location>
        <begin position="457"/>
        <end position="470"/>
    </location>
</feature>
<feature type="active site" description="Proton acceptor" evidence="4 6">
    <location>
        <position position="134"/>
    </location>
</feature>
<feature type="binding site" evidence="4">
    <location>
        <begin position="18"/>
        <end position="26"/>
    </location>
    <ligand>
        <name>ATP</name>
        <dbReference type="ChEBI" id="CHEBI:30616"/>
    </ligand>
</feature>
<feature type="binding site" evidence="4">
    <location>
        <position position="41"/>
    </location>
    <ligand>
        <name>ATP</name>
        <dbReference type="ChEBI" id="CHEBI:30616"/>
    </ligand>
</feature>
<feature type="modified residue" description="Phosphoserine" evidence="3">
    <location>
        <position position="156"/>
    </location>
</feature>
<feature type="modified residue" description="Phosphothreonine" evidence="2">
    <location>
        <position position="170"/>
    </location>
</feature>
<reference key="1">
    <citation type="journal article" date="2001" name="EMBO J.">
        <title>The NAF domain defines a novel protein-protein interaction module conserved in Ca(2+)-regulated kinases.</title>
        <authorList>
            <person name="Albrecht V."/>
            <person name="Ritz O."/>
            <person name="Linder S."/>
            <person name="Harter K."/>
            <person name="Kudla J."/>
        </authorList>
    </citation>
    <scope>NUCLEOTIDE SEQUENCE [MRNA]</scope>
</reference>
<reference key="2">
    <citation type="journal article" date="2001" name="Plant Cell">
        <title>Molecular characterization of functional domains in the protein kinase SOS2 that is required for plant salt tolerance.</title>
        <authorList>
            <person name="Guo Y."/>
            <person name="Halfter U."/>
            <person name="Ishitani M."/>
            <person name="Zhu J.-K."/>
        </authorList>
    </citation>
    <scope>NUCLEOTIDE SEQUENCE [MRNA]</scope>
    <scope>TISSUE SPECIFICITY</scope>
    <scope>INDUCTION</scope>
    <source>
        <strain>cv. Columbia</strain>
    </source>
</reference>
<reference key="3">
    <citation type="journal article" date="2000" name="DNA Res.">
        <title>Structural analysis of Arabidopsis thaliana chromosome 5. X. Sequence features of the regions of 3,076,755 bp covered by sixty P1 and TAC clones.</title>
        <authorList>
            <person name="Sato S."/>
            <person name="Nakamura Y."/>
            <person name="Kaneko T."/>
            <person name="Katoh T."/>
            <person name="Asamizu E."/>
            <person name="Kotani H."/>
            <person name="Tabata S."/>
        </authorList>
    </citation>
    <scope>NUCLEOTIDE SEQUENCE [LARGE SCALE GENOMIC DNA]</scope>
    <source>
        <strain>cv. Columbia</strain>
    </source>
</reference>
<reference key="4">
    <citation type="journal article" date="2017" name="Plant J.">
        <title>Araport11: a complete reannotation of the Arabidopsis thaliana reference genome.</title>
        <authorList>
            <person name="Cheng C.Y."/>
            <person name="Krishnakumar V."/>
            <person name="Chan A.P."/>
            <person name="Thibaud-Nissen F."/>
            <person name="Schobel S."/>
            <person name="Town C.D."/>
        </authorList>
    </citation>
    <scope>GENOME REANNOTATION</scope>
    <source>
        <strain>cv. Columbia</strain>
    </source>
</reference>
<reference key="5">
    <citation type="journal article" date="2003" name="Science">
        <title>Empirical analysis of transcriptional activity in the Arabidopsis genome.</title>
        <authorList>
            <person name="Yamada K."/>
            <person name="Lim J."/>
            <person name="Dale J.M."/>
            <person name="Chen H."/>
            <person name="Shinn P."/>
            <person name="Palm C.J."/>
            <person name="Southwick A.M."/>
            <person name="Wu H.C."/>
            <person name="Kim C.J."/>
            <person name="Nguyen M."/>
            <person name="Pham P.K."/>
            <person name="Cheuk R.F."/>
            <person name="Karlin-Newmann G."/>
            <person name="Liu S.X."/>
            <person name="Lam B."/>
            <person name="Sakano H."/>
            <person name="Wu T."/>
            <person name="Yu G."/>
            <person name="Miranda M."/>
            <person name="Quach H.L."/>
            <person name="Tripp M."/>
            <person name="Chang C.H."/>
            <person name="Lee J.M."/>
            <person name="Toriumi M.J."/>
            <person name="Chan M.M."/>
            <person name="Tang C.C."/>
            <person name="Onodera C.S."/>
            <person name="Deng J.M."/>
            <person name="Akiyama K."/>
            <person name="Ansari Y."/>
            <person name="Arakawa T."/>
            <person name="Banh J."/>
            <person name="Banno F."/>
            <person name="Bowser L."/>
            <person name="Brooks S.Y."/>
            <person name="Carninci P."/>
            <person name="Chao Q."/>
            <person name="Choy N."/>
            <person name="Enju A."/>
            <person name="Goldsmith A.D."/>
            <person name="Gurjal M."/>
            <person name="Hansen N.F."/>
            <person name="Hayashizaki Y."/>
            <person name="Johnson-Hopson C."/>
            <person name="Hsuan V.W."/>
            <person name="Iida K."/>
            <person name="Karnes M."/>
            <person name="Khan S."/>
            <person name="Koesema E."/>
            <person name="Ishida J."/>
            <person name="Jiang P.X."/>
            <person name="Jones T."/>
            <person name="Kawai J."/>
            <person name="Kamiya A."/>
            <person name="Meyers C."/>
            <person name="Nakajima M."/>
            <person name="Narusaka M."/>
            <person name="Seki M."/>
            <person name="Sakurai T."/>
            <person name="Satou M."/>
            <person name="Tamse R."/>
            <person name="Vaysberg M."/>
            <person name="Wallender E.K."/>
            <person name="Wong C."/>
            <person name="Yamamura Y."/>
            <person name="Yuan S."/>
            <person name="Shinozaki K."/>
            <person name="Davis R.W."/>
            <person name="Theologis A."/>
            <person name="Ecker J.R."/>
        </authorList>
    </citation>
    <scope>NUCLEOTIDE SEQUENCE [LARGE SCALE MRNA]</scope>
    <source>
        <strain>cv. Columbia</strain>
    </source>
</reference>
<reference key="6">
    <citation type="submission" date="2006-07" db="EMBL/GenBank/DDBJ databases">
        <title>Large-scale analysis of RIKEN Arabidopsis full-length (RAFL) cDNAs.</title>
        <authorList>
            <person name="Totoki Y."/>
            <person name="Seki M."/>
            <person name="Ishida J."/>
            <person name="Nakajima M."/>
            <person name="Enju A."/>
            <person name="Kamiya A."/>
            <person name="Narusaka M."/>
            <person name="Shin-i T."/>
            <person name="Nakagawa M."/>
            <person name="Sakamoto N."/>
            <person name="Oishi K."/>
            <person name="Kohara Y."/>
            <person name="Kobayashi M."/>
            <person name="Toyoda A."/>
            <person name="Sakaki Y."/>
            <person name="Sakurai T."/>
            <person name="Iida K."/>
            <person name="Akiyama K."/>
            <person name="Satou M."/>
            <person name="Toyoda T."/>
            <person name="Konagaya A."/>
            <person name="Carninci P."/>
            <person name="Kawai J."/>
            <person name="Hayashizaki Y."/>
            <person name="Shinozaki K."/>
        </authorList>
    </citation>
    <scope>NUCLEOTIDE SEQUENCE [LARGE SCALE MRNA]</scope>
    <source>
        <strain>cv. Columbia</strain>
    </source>
</reference>
<reference key="7">
    <citation type="journal article" date="2000" name="Proc. Natl. Acad. Sci. U.S.A.">
        <title>The Arabidopsis SOS2 protein kinase physically interacts with and is activated by the calcium-binding protein SOS3.</title>
        <authorList>
            <person name="Halfter U."/>
            <person name="Ishitani M."/>
            <person name="Zhu J.-K."/>
        </authorList>
    </citation>
    <scope>INTERACTION WITH CBL4</scope>
</reference>
<reference key="8">
    <citation type="journal article" date="2003" name="Plant Physiol.">
        <title>The Arabidopsis CDPK-SnRK superfamily of protein kinases.</title>
        <authorList>
            <person name="Hrabak E.M."/>
            <person name="Chan C.W.M."/>
            <person name="Gribskov M."/>
            <person name="Harper J.F."/>
            <person name="Choi J.H."/>
            <person name="Halford N."/>
            <person name="Kudla J."/>
            <person name="Luan S."/>
            <person name="Nimmo H.G."/>
            <person name="Sussman M.R."/>
            <person name="Thomas M."/>
            <person name="Walker-Simmons K."/>
            <person name="Zhu J.-K."/>
            <person name="Harmon A.C."/>
        </authorList>
    </citation>
    <scope>GENE FAMILY</scope>
    <scope>NOMENCLATURE</scope>
</reference>
<name>CIPKA_ARATH</name>
<keyword id="KW-0067">ATP-binding</keyword>
<keyword id="KW-0418">Kinase</keyword>
<keyword id="KW-0464">Manganese</keyword>
<keyword id="KW-0547">Nucleotide-binding</keyword>
<keyword id="KW-0597">Phosphoprotein</keyword>
<keyword id="KW-1185">Reference proteome</keyword>
<keyword id="KW-0723">Serine/threonine-protein kinase</keyword>
<keyword id="KW-0808">Transferase</keyword>
<accession>Q9C562</accession>
<accession>Q9LVL3</accession>
<proteinExistence type="evidence at protein level"/>
<protein>
    <recommendedName>
        <fullName>CBL-interacting serine/threonine-protein kinase 10</fullName>
        <ecNumber>2.7.11.1</ecNumber>
    </recommendedName>
    <alternativeName>
        <fullName>SNF1-related kinase 3.8</fullName>
    </alternativeName>
    <alternativeName>
        <fullName>SOS2-like protein kinase PKS2</fullName>
    </alternativeName>
    <alternativeName>
        <fullName>SOS3-interacting protein 1</fullName>
    </alternativeName>
</protein>
<evidence type="ECO:0000250" key="1"/>
<evidence type="ECO:0000250" key="2">
    <source>
        <dbReference type="UniProtKB" id="Q38997"/>
    </source>
</evidence>
<evidence type="ECO:0000250" key="3">
    <source>
        <dbReference type="UniProtKB" id="Q93V58"/>
    </source>
</evidence>
<evidence type="ECO:0000255" key="4">
    <source>
        <dbReference type="PROSITE-ProRule" id="PRU00159"/>
    </source>
</evidence>
<evidence type="ECO:0000255" key="5">
    <source>
        <dbReference type="PROSITE-ProRule" id="PRU00256"/>
    </source>
</evidence>
<evidence type="ECO:0000255" key="6">
    <source>
        <dbReference type="PROSITE-ProRule" id="PRU10027"/>
    </source>
</evidence>
<evidence type="ECO:0000256" key="7">
    <source>
        <dbReference type="SAM" id="MobiDB-lite"/>
    </source>
</evidence>
<evidence type="ECO:0000269" key="8">
    <source>
    </source>
</evidence>
<evidence type="ECO:0000269" key="9">
    <source>
    </source>
</evidence>
<evidence type="ECO:0000305" key="10"/>
<dbReference type="EC" id="2.7.11.1"/>
<dbReference type="EMBL" id="AF295665">
    <property type="protein sequence ID" value="AAK16685.1"/>
    <property type="molecule type" value="mRNA"/>
</dbReference>
<dbReference type="EMBL" id="AF339143">
    <property type="protein sequence ID" value="AAK26841.1"/>
    <property type="molecule type" value="mRNA"/>
</dbReference>
<dbReference type="EMBL" id="AB019228">
    <property type="protein sequence ID" value="BAA96929.1"/>
    <property type="status" value="ALT_SEQ"/>
    <property type="molecule type" value="Genomic_DNA"/>
</dbReference>
<dbReference type="EMBL" id="CP002688">
    <property type="protein sequence ID" value="AED97046.1"/>
    <property type="molecule type" value="Genomic_DNA"/>
</dbReference>
<dbReference type="EMBL" id="AY094414">
    <property type="protein sequence ID" value="AAM19789.1"/>
    <property type="molecule type" value="mRNA"/>
</dbReference>
<dbReference type="EMBL" id="AY124002">
    <property type="protein sequence ID" value="AAM74510.1"/>
    <property type="molecule type" value="mRNA"/>
</dbReference>
<dbReference type="EMBL" id="AY125530">
    <property type="protein sequence ID" value="AAM78040.1"/>
    <property type="molecule type" value="mRNA"/>
</dbReference>
<dbReference type="EMBL" id="AK226938">
    <property type="protein sequence ID" value="BAE99008.1"/>
    <property type="molecule type" value="mRNA"/>
</dbReference>
<dbReference type="RefSeq" id="NP_568878.1">
    <property type="nucleotide sequence ID" value="NM_125224.3"/>
</dbReference>
<dbReference type="SMR" id="Q9C562"/>
<dbReference type="BioGRID" id="21195">
    <property type="interactions" value="7"/>
</dbReference>
<dbReference type="FunCoup" id="Q9C562">
    <property type="interactions" value="1451"/>
</dbReference>
<dbReference type="IntAct" id="Q9C562">
    <property type="interactions" value="5"/>
</dbReference>
<dbReference type="STRING" id="3702.Q9C562"/>
<dbReference type="iPTMnet" id="Q9C562"/>
<dbReference type="PaxDb" id="3702-AT5G58380.1"/>
<dbReference type="ProteomicsDB" id="246510"/>
<dbReference type="EnsemblPlants" id="AT5G58380.1">
    <property type="protein sequence ID" value="AT5G58380.1"/>
    <property type="gene ID" value="AT5G58380"/>
</dbReference>
<dbReference type="GeneID" id="835951"/>
<dbReference type="Gramene" id="AT5G58380.1">
    <property type="protein sequence ID" value="AT5G58380.1"/>
    <property type="gene ID" value="AT5G58380"/>
</dbReference>
<dbReference type="KEGG" id="ath:AT5G58380"/>
<dbReference type="Araport" id="AT5G58380"/>
<dbReference type="TAIR" id="AT5G58380">
    <property type="gene designation" value="SIP1"/>
</dbReference>
<dbReference type="eggNOG" id="KOG0583">
    <property type="taxonomic scope" value="Eukaryota"/>
</dbReference>
<dbReference type="HOGENOM" id="CLU_000288_59_0_1"/>
<dbReference type="InParanoid" id="Q9C562"/>
<dbReference type="OMA" id="EARFTIW"/>
<dbReference type="OrthoDB" id="193931at2759"/>
<dbReference type="PhylomeDB" id="Q9C562"/>
<dbReference type="PRO" id="PR:Q9C562"/>
<dbReference type="Proteomes" id="UP000006548">
    <property type="component" value="Chromosome 5"/>
</dbReference>
<dbReference type="ExpressionAtlas" id="Q9C562">
    <property type="expression patterns" value="baseline and differential"/>
</dbReference>
<dbReference type="GO" id="GO:0005524">
    <property type="term" value="F:ATP binding"/>
    <property type="evidence" value="ECO:0007669"/>
    <property type="project" value="UniProtKB-KW"/>
</dbReference>
<dbReference type="GO" id="GO:0106310">
    <property type="term" value="F:protein serine kinase activity"/>
    <property type="evidence" value="ECO:0007669"/>
    <property type="project" value="RHEA"/>
</dbReference>
<dbReference type="GO" id="GO:0004674">
    <property type="term" value="F:protein serine/threonine kinase activity"/>
    <property type="evidence" value="ECO:0007669"/>
    <property type="project" value="UniProtKB-KW"/>
</dbReference>
<dbReference type="GO" id="GO:0007165">
    <property type="term" value="P:signal transduction"/>
    <property type="evidence" value="ECO:0007669"/>
    <property type="project" value="InterPro"/>
</dbReference>
<dbReference type="CDD" id="cd12195">
    <property type="entry name" value="CIPK_C"/>
    <property type="match status" value="1"/>
</dbReference>
<dbReference type="FunFam" id="1.10.510.10:FF:000279">
    <property type="entry name" value="Non-specific serine/threonine protein kinase"/>
    <property type="match status" value="1"/>
</dbReference>
<dbReference type="FunFam" id="3.30.200.20:FF:000096">
    <property type="entry name" value="Non-specific serine/threonine protein kinase"/>
    <property type="match status" value="1"/>
</dbReference>
<dbReference type="FunFam" id="3.30.310.80:FF:000005">
    <property type="entry name" value="Non-specific serine/threonine protein kinase"/>
    <property type="match status" value="1"/>
</dbReference>
<dbReference type="Gene3D" id="3.30.310.80">
    <property type="entry name" value="Kinase associated domain 1, KA1"/>
    <property type="match status" value="1"/>
</dbReference>
<dbReference type="Gene3D" id="1.10.510.10">
    <property type="entry name" value="Transferase(Phosphotransferase) domain 1"/>
    <property type="match status" value="1"/>
</dbReference>
<dbReference type="InterPro" id="IPR011009">
    <property type="entry name" value="Kinase-like_dom_sf"/>
</dbReference>
<dbReference type="InterPro" id="IPR018451">
    <property type="entry name" value="NAF/FISL_domain"/>
</dbReference>
<dbReference type="InterPro" id="IPR004041">
    <property type="entry name" value="NAF_dom"/>
</dbReference>
<dbReference type="InterPro" id="IPR000719">
    <property type="entry name" value="Prot_kinase_dom"/>
</dbReference>
<dbReference type="InterPro" id="IPR017441">
    <property type="entry name" value="Protein_kinase_ATP_BS"/>
</dbReference>
<dbReference type="InterPro" id="IPR008271">
    <property type="entry name" value="Ser/Thr_kinase_AS"/>
</dbReference>
<dbReference type="PANTHER" id="PTHR43895">
    <property type="entry name" value="CALCIUM/CALMODULIN-DEPENDENT PROTEIN KINASE KINASE-RELATED"/>
    <property type="match status" value="1"/>
</dbReference>
<dbReference type="PANTHER" id="PTHR43895:SF42">
    <property type="entry name" value="CBL-INTERACTING SERINE_THREONINE-PROTEIN KINASE 10"/>
    <property type="match status" value="1"/>
</dbReference>
<dbReference type="Pfam" id="PF03822">
    <property type="entry name" value="NAF"/>
    <property type="match status" value="1"/>
</dbReference>
<dbReference type="Pfam" id="PF00069">
    <property type="entry name" value="Pkinase"/>
    <property type="match status" value="1"/>
</dbReference>
<dbReference type="SMART" id="SM00220">
    <property type="entry name" value="S_TKc"/>
    <property type="match status" value="1"/>
</dbReference>
<dbReference type="SUPFAM" id="SSF56112">
    <property type="entry name" value="Protein kinase-like (PK-like)"/>
    <property type="match status" value="1"/>
</dbReference>
<dbReference type="PROSITE" id="PS50816">
    <property type="entry name" value="NAF"/>
    <property type="match status" value="1"/>
</dbReference>
<dbReference type="PROSITE" id="PS00107">
    <property type="entry name" value="PROTEIN_KINASE_ATP"/>
    <property type="match status" value="1"/>
</dbReference>
<dbReference type="PROSITE" id="PS50011">
    <property type="entry name" value="PROTEIN_KINASE_DOM"/>
    <property type="match status" value="1"/>
</dbReference>
<dbReference type="PROSITE" id="PS00108">
    <property type="entry name" value="PROTEIN_KINASE_ST"/>
    <property type="match status" value="1"/>
</dbReference>
<gene>
    <name type="primary">CIPK10</name>
    <name type="synonym">PKS2</name>
    <name type="synonym">SIP1</name>
    <name type="synonym">SnRK3.8</name>
    <name type="ordered locus">At5g58380</name>
    <name type="ORF">MCK7.25</name>
</gene>
<sequence length="479" mass="54589">MENKPSVLTDKYDVGRLLGQGTFAKVYYGRSILTNQSVAIKMIDKEKVMKVGLIEQIKREISVMRIARHPNVVELYEVMATKTRIYFVMEYCKGGELFNKVAKGKLRDDVAWKYFYQLINAVDFCHSREVYHRDIKPENLLLDDNENLKVSDFGLSALADCKRQDGLLHTTCGTPAYVAPEVINRKGYDGTKADIWSCGVVLFVLLAGYLPFHDSNLMEMYRKIGKADFKAPSWFAPEVRRLLCKMLDPNPETRITIARIRESSWFRKGLHMKQKKMEKRVKEINSVEAGTAGTNENGAGPSENGAGPSENGDRVTEENHTDEPTNLNAFDLIALSAGFDLAGLFGDDNKRESRFTSQKPASVIISKLEEVAQRLKLSIRKREAGLFKLERLKEGRKGILSMDAEIFQVTPNFHLVEVKKSNGDTLEYQKLVAEDLRPALSDIVWVWQGEKDELTSQQETEYQQQQQQEQQEQEEPLKF</sequence>
<organism>
    <name type="scientific">Arabidopsis thaliana</name>
    <name type="common">Mouse-ear cress</name>
    <dbReference type="NCBI Taxonomy" id="3702"/>
    <lineage>
        <taxon>Eukaryota</taxon>
        <taxon>Viridiplantae</taxon>
        <taxon>Streptophyta</taxon>
        <taxon>Embryophyta</taxon>
        <taxon>Tracheophyta</taxon>
        <taxon>Spermatophyta</taxon>
        <taxon>Magnoliopsida</taxon>
        <taxon>eudicotyledons</taxon>
        <taxon>Gunneridae</taxon>
        <taxon>Pentapetalae</taxon>
        <taxon>rosids</taxon>
        <taxon>malvids</taxon>
        <taxon>Brassicales</taxon>
        <taxon>Brassicaceae</taxon>
        <taxon>Camelineae</taxon>
        <taxon>Arabidopsis</taxon>
    </lineage>
</organism>